<gene>
    <name evidence="1" type="primary">gltX1</name>
    <name type="ordered locus">BH06390</name>
</gene>
<protein>
    <recommendedName>
        <fullName evidence="1">Glutamate--tRNA ligase 1</fullName>
        <ecNumber evidence="1">6.1.1.17</ecNumber>
    </recommendedName>
    <alternativeName>
        <fullName evidence="1">Glutamyl-tRNA synthetase 1</fullName>
        <shortName evidence="1">GluRS 1</shortName>
    </alternativeName>
</protein>
<accession>Q6G3V8</accession>
<organism>
    <name type="scientific">Bartonella henselae (strain ATCC 49882 / DSM 28221 / CCUG 30454 / Houston 1)</name>
    <name type="common">Rochalimaea henselae</name>
    <dbReference type="NCBI Taxonomy" id="283166"/>
    <lineage>
        <taxon>Bacteria</taxon>
        <taxon>Pseudomonadati</taxon>
        <taxon>Pseudomonadota</taxon>
        <taxon>Alphaproteobacteria</taxon>
        <taxon>Hyphomicrobiales</taxon>
        <taxon>Bartonellaceae</taxon>
        <taxon>Bartonella</taxon>
    </lineage>
</organism>
<comment type="function">
    <text evidence="1">Catalyzes the attachment of glutamate to tRNA(Glu) in a two-step reaction: glutamate is first activated by ATP to form Glu-AMP and then transferred to the acceptor end of tRNA(Glu).</text>
</comment>
<comment type="catalytic activity">
    <reaction evidence="1">
        <text>tRNA(Glu) + L-glutamate + ATP = L-glutamyl-tRNA(Glu) + AMP + diphosphate</text>
        <dbReference type="Rhea" id="RHEA:23540"/>
        <dbReference type="Rhea" id="RHEA-COMP:9663"/>
        <dbReference type="Rhea" id="RHEA-COMP:9680"/>
        <dbReference type="ChEBI" id="CHEBI:29985"/>
        <dbReference type="ChEBI" id="CHEBI:30616"/>
        <dbReference type="ChEBI" id="CHEBI:33019"/>
        <dbReference type="ChEBI" id="CHEBI:78442"/>
        <dbReference type="ChEBI" id="CHEBI:78520"/>
        <dbReference type="ChEBI" id="CHEBI:456215"/>
        <dbReference type="EC" id="6.1.1.17"/>
    </reaction>
</comment>
<comment type="subunit">
    <text evidence="1">Monomer.</text>
</comment>
<comment type="subcellular location">
    <subcellularLocation>
        <location evidence="1">Cytoplasm</location>
    </subcellularLocation>
</comment>
<comment type="similarity">
    <text evidence="1">Belongs to the class-I aminoacyl-tRNA synthetase family. Glutamate--tRNA ligase type 1 subfamily.</text>
</comment>
<proteinExistence type="inferred from homology"/>
<name>SYE1_BARHE</name>
<evidence type="ECO:0000255" key="1">
    <source>
        <dbReference type="HAMAP-Rule" id="MF_00022"/>
    </source>
</evidence>
<dbReference type="EC" id="6.1.1.17" evidence="1"/>
<dbReference type="EMBL" id="BX897699">
    <property type="protein sequence ID" value="CAF27443.1"/>
    <property type="molecule type" value="Genomic_DNA"/>
</dbReference>
<dbReference type="SMR" id="Q6G3V8"/>
<dbReference type="PaxDb" id="283166-BH06390"/>
<dbReference type="EnsemblBacteria" id="CAF27443">
    <property type="protein sequence ID" value="CAF27443"/>
    <property type="gene ID" value="BH06390"/>
</dbReference>
<dbReference type="KEGG" id="bhe:BH06390"/>
<dbReference type="eggNOG" id="COG0008">
    <property type="taxonomic scope" value="Bacteria"/>
</dbReference>
<dbReference type="OrthoDB" id="9807503at2"/>
<dbReference type="Proteomes" id="UP000000421">
    <property type="component" value="Chromosome"/>
</dbReference>
<dbReference type="GO" id="GO:0005829">
    <property type="term" value="C:cytosol"/>
    <property type="evidence" value="ECO:0007669"/>
    <property type="project" value="TreeGrafter"/>
</dbReference>
<dbReference type="GO" id="GO:0005524">
    <property type="term" value="F:ATP binding"/>
    <property type="evidence" value="ECO:0007669"/>
    <property type="project" value="UniProtKB-UniRule"/>
</dbReference>
<dbReference type="GO" id="GO:0004818">
    <property type="term" value="F:glutamate-tRNA ligase activity"/>
    <property type="evidence" value="ECO:0007669"/>
    <property type="project" value="UniProtKB-UniRule"/>
</dbReference>
<dbReference type="GO" id="GO:0000049">
    <property type="term" value="F:tRNA binding"/>
    <property type="evidence" value="ECO:0007669"/>
    <property type="project" value="InterPro"/>
</dbReference>
<dbReference type="GO" id="GO:0008270">
    <property type="term" value="F:zinc ion binding"/>
    <property type="evidence" value="ECO:0007669"/>
    <property type="project" value="InterPro"/>
</dbReference>
<dbReference type="GO" id="GO:0006424">
    <property type="term" value="P:glutamyl-tRNA aminoacylation"/>
    <property type="evidence" value="ECO:0007669"/>
    <property type="project" value="UniProtKB-UniRule"/>
</dbReference>
<dbReference type="CDD" id="cd00808">
    <property type="entry name" value="GluRS_core"/>
    <property type="match status" value="1"/>
</dbReference>
<dbReference type="FunFam" id="3.40.50.620:FF:000007">
    <property type="entry name" value="Glutamate--tRNA ligase"/>
    <property type="match status" value="1"/>
</dbReference>
<dbReference type="Gene3D" id="1.10.10.350">
    <property type="match status" value="1"/>
</dbReference>
<dbReference type="Gene3D" id="3.40.50.620">
    <property type="entry name" value="HUPs"/>
    <property type="match status" value="1"/>
</dbReference>
<dbReference type="HAMAP" id="MF_00022">
    <property type="entry name" value="Glu_tRNA_synth_type1"/>
    <property type="match status" value="1"/>
</dbReference>
<dbReference type="InterPro" id="IPR045462">
    <property type="entry name" value="aa-tRNA-synth_I_cd-bd"/>
</dbReference>
<dbReference type="InterPro" id="IPR020751">
    <property type="entry name" value="aa-tRNA-synth_I_codon-bd_sub2"/>
</dbReference>
<dbReference type="InterPro" id="IPR001412">
    <property type="entry name" value="aa-tRNA-synth_I_CS"/>
</dbReference>
<dbReference type="InterPro" id="IPR008925">
    <property type="entry name" value="aa_tRNA-synth_I_cd-bd_sf"/>
</dbReference>
<dbReference type="InterPro" id="IPR004527">
    <property type="entry name" value="Glu-tRNA-ligase_bac/mito"/>
</dbReference>
<dbReference type="InterPro" id="IPR000924">
    <property type="entry name" value="Glu/Gln-tRNA-synth"/>
</dbReference>
<dbReference type="InterPro" id="IPR020058">
    <property type="entry name" value="Glu/Gln-tRNA-synth_Ib_cat-dom"/>
</dbReference>
<dbReference type="InterPro" id="IPR049940">
    <property type="entry name" value="GluQ/Sye"/>
</dbReference>
<dbReference type="InterPro" id="IPR033910">
    <property type="entry name" value="GluRS_core"/>
</dbReference>
<dbReference type="InterPro" id="IPR014729">
    <property type="entry name" value="Rossmann-like_a/b/a_fold"/>
</dbReference>
<dbReference type="NCBIfam" id="TIGR00464">
    <property type="entry name" value="gltX_bact"/>
    <property type="match status" value="1"/>
</dbReference>
<dbReference type="PANTHER" id="PTHR43311">
    <property type="entry name" value="GLUTAMATE--TRNA LIGASE"/>
    <property type="match status" value="1"/>
</dbReference>
<dbReference type="PANTHER" id="PTHR43311:SF2">
    <property type="entry name" value="GLUTAMATE--TRNA LIGASE, MITOCHONDRIAL-RELATED"/>
    <property type="match status" value="1"/>
</dbReference>
<dbReference type="Pfam" id="PF19269">
    <property type="entry name" value="Anticodon_2"/>
    <property type="match status" value="1"/>
</dbReference>
<dbReference type="Pfam" id="PF00749">
    <property type="entry name" value="tRNA-synt_1c"/>
    <property type="match status" value="1"/>
</dbReference>
<dbReference type="PRINTS" id="PR00987">
    <property type="entry name" value="TRNASYNTHGLU"/>
</dbReference>
<dbReference type="SUPFAM" id="SSF48163">
    <property type="entry name" value="An anticodon-binding domain of class I aminoacyl-tRNA synthetases"/>
    <property type="match status" value="1"/>
</dbReference>
<dbReference type="SUPFAM" id="SSF52374">
    <property type="entry name" value="Nucleotidylyl transferase"/>
    <property type="match status" value="1"/>
</dbReference>
<dbReference type="PROSITE" id="PS00178">
    <property type="entry name" value="AA_TRNA_LIGASE_I"/>
    <property type="match status" value="1"/>
</dbReference>
<reference key="1">
    <citation type="journal article" date="2004" name="Proc. Natl. Acad. Sci. U.S.A.">
        <title>The louse-borne human pathogen Bartonella quintana is a genomic derivative of the zoonotic agent Bartonella henselae.</title>
        <authorList>
            <person name="Alsmark U.C.M."/>
            <person name="Frank A.C."/>
            <person name="Karlberg E.O."/>
            <person name="Legault B.-A."/>
            <person name="Ardell D.H."/>
            <person name="Canbaeck B."/>
            <person name="Eriksson A.-S."/>
            <person name="Naeslund A.K."/>
            <person name="Handley S.A."/>
            <person name="Huvet M."/>
            <person name="La Scola B."/>
            <person name="Holmberg M."/>
            <person name="Andersson S.G.E."/>
        </authorList>
    </citation>
    <scope>NUCLEOTIDE SEQUENCE [LARGE SCALE GENOMIC DNA]</scope>
    <source>
        <strain>ATCC 49882 / DSM 28221 / CCUG 30454 / Houston 1</strain>
    </source>
</reference>
<feature type="chain" id="PRO_0000119510" description="Glutamate--tRNA ligase 1">
    <location>
        <begin position="1"/>
        <end position="483"/>
    </location>
</feature>
<feature type="short sequence motif" description="'HIGH' region" evidence="1">
    <location>
        <begin position="9"/>
        <end position="19"/>
    </location>
</feature>
<feature type="short sequence motif" description="'KMSKS' region" evidence="1">
    <location>
        <begin position="238"/>
        <end position="242"/>
    </location>
</feature>
<feature type="binding site" evidence="1">
    <location>
        <position position="241"/>
    </location>
    <ligand>
        <name>ATP</name>
        <dbReference type="ChEBI" id="CHEBI:30616"/>
    </ligand>
</feature>
<sequence>MPVITRFAPSPTGFLHIGGARTALFNWLYAKHTGGKMLLRIEDTDRERSTEAAVKAIIDGLHWMGLSYDGDPISQFERAERHRQVAEQLVKDGKAYYCYASPEELAEIRENARAEGRPPRYDGRWRERDISKAPKDIKPVIRIKAPQDGETIVHDRVQGDVRFPNKDLDDFIILRSDGSPTYMHAVVVDDHDMGVTHIIRGDDHLTNAARQTIIFNAMGWDIPVMAHIPLIHGENGAKLSKRHGALGVAAYRKMGYLPAALRNYLVRLGWSHGDDELMSIEDMISWFDIDDINKGAARFDLKKLDAINGHYIRMSNNQDLFDAALHILKEIEGGLQIMERLDEQRRAQFLKAIPNLKERSKTLCELIDNASFIFTKRPLQLDEKAQTLLDKNGLAILKVIYLALKACPSWDVKSLDETLRSYAQTQDLKFGSIAQPLRAALTGRLTSPGVFDVLVLLGRDESLNRINDQLVTTACSLHTNQCI</sequence>
<keyword id="KW-0030">Aminoacyl-tRNA synthetase</keyword>
<keyword id="KW-0067">ATP-binding</keyword>
<keyword id="KW-0963">Cytoplasm</keyword>
<keyword id="KW-0436">Ligase</keyword>
<keyword id="KW-0547">Nucleotide-binding</keyword>
<keyword id="KW-0648">Protein biosynthesis</keyword>